<comment type="function">
    <text evidence="1">Catalyzes the oxidative deamination and cyclization of 2-amino-3,7-dideoxy-D-threo-hept-6-ulosonic acid (ADH) to yield 3-dehydroquinate (DHQ), which is fed into the canonical shikimic pathway of aromatic amino acid biosynthesis.</text>
</comment>
<comment type="catalytic activity">
    <reaction evidence="1">
        <text>2-amino-2,3,7-trideoxy-D-lyxo-hept-6-ulosonate + NAD(+) + H2O = 3-dehydroquinate + NH4(+) + NADH + H(+)</text>
        <dbReference type="Rhea" id="RHEA:25956"/>
        <dbReference type="ChEBI" id="CHEBI:15377"/>
        <dbReference type="ChEBI" id="CHEBI:15378"/>
        <dbReference type="ChEBI" id="CHEBI:28938"/>
        <dbReference type="ChEBI" id="CHEBI:32364"/>
        <dbReference type="ChEBI" id="CHEBI:57540"/>
        <dbReference type="ChEBI" id="CHEBI:57945"/>
        <dbReference type="ChEBI" id="CHEBI:58859"/>
        <dbReference type="EC" id="1.4.1.24"/>
    </reaction>
</comment>
<comment type="similarity">
    <text evidence="1">Belongs to the archaeal-type DHQ synthase family.</text>
</comment>
<sequence length="388" mass="42466">MTRSVWLKADSEVGDWETRKRRITAGIEAGVDWVLVDEEDVDRVSELGEINIAAFTNGDVHVMEAEAEDSEADATIVGKDGEGDGTVDLPSDFSGSADLSTLRQNGAAPDGGYVRIFDEDYEAFAEAVAAEADFTIVIGENWQIIPLENLIARVGEETDLIAGVRTAEDARTAYETLELGADGVLLDTDEVDEIRKTVEVRDEMGRESLDLEYAEVTAIEQTGSADRVCIDTGSLMEHDEGMLVGSMARGLFFVHAETAESPYVASRPFRVNAGAVHAYVRTPDGGTKYLSELQSGDEVQIVDANGRTREAIVGRAKIEKRPMFRVQAETEDSDRIETLLQNAETIKVHTQDGRTAVTDLEPGDEILIHHEDTATHFGERIEESIIEK</sequence>
<evidence type="ECO:0000255" key="1">
    <source>
        <dbReference type="HAMAP-Rule" id="MF_01244"/>
    </source>
</evidence>
<proteinExistence type="inferred from homology"/>
<accession>Q5V143</accession>
<reference key="1">
    <citation type="journal article" date="2004" name="Genome Res.">
        <title>Genome sequence of Haloarcula marismortui: a halophilic archaeon from the Dead Sea.</title>
        <authorList>
            <person name="Baliga N.S."/>
            <person name="Bonneau R."/>
            <person name="Facciotti M.T."/>
            <person name="Pan M."/>
            <person name="Glusman G."/>
            <person name="Deutsch E.W."/>
            <person name="Shannon P."/>
            <person name="Chiu Y."/>
            <person name="Weng R.S."/>
            <person name="Gan R.R."/>
            <person name="Hung P."/>
            <person name="Date S.V."/>
            <person name="Marcotte E."/>
            <person name="Hood L."/>
            <person name="Ng W.V."/>
        </authorList>
    </citation>
    <scope>NUCLEOTIDE SEQUENCE [LARGE SCALE GENOMIC DNA]</scope>
    <source>
        <strain>ATCC 43049 / DSM 3752 / JCM 8966 / VKM B-1809</strain>
    </source>
</reference>
<name>DHQS_HALMA</name>
<feature type="chain" id="PRO_1000067063" description="3-dehydroquinate synthase">
    <location>
        <begin position="1"/>
        <end position="388"/>
    </location>
</feature>
<protein>
    <recommendedName>
        <fullName evidence="1">3-dehydroquinate synthase</fullName>
        <shortName evidence="1">DHQ synthase</shortName>
        <ecNumber evidence="1">1.4.1.24</ecNumber>
    </recommendedName>
    <alternativeName>
        <fullName evidence="1">3-dehydroquinate synthase II</fullName>
    </alternativeName>
</protein>
<organism>
    <name type="scientific">Haloarcula marismortui (strain ATCC 43049 / DSM 3752 / JCM 8966 / VKM B-1809)</name>
    <name type="common">Halobacterium marismortui</name>
    <dbReference type="NCBI Taxonomy" id="272569"/>
    <lineage>
        <taxon>Archaea</taxon>
        <taxon>Methanobacteriati</taxon>
        <taxon>Methanobacteriota</taxon>
        <taxon>Stenosarchaea group</taxon>
        <taxon>Halobacteria</taxon>
        <taxon>Halobacteriales</taxon>
        <taxon>Haloarculaceae</taxon>
        <taxon>Haloarcula</taxon>
    </lineage>
</organism>
<gene>
    <name evidence="1" type="primary">aroB'</name>
    <name type="ordered locus">rrnAC1879</name>
</gene>
<dbReference type="EC" id="1.4.1.24" evidence="1"/>
<dbReference type="EMBL" id="AY596297">
    <property type="protein sequence ID" value="AAV46760.1"/>
    <property type="molecule type" value="Genomic_DNA"/>
</dbReference>
<dbReference type="RefSeq" id="WP_011223903.1">
    <property type="nucleotide sequence ID" value="NC_006396.1"/>
</dbReference>
<dbReference type="STRING" id="272569.rrnAC1879"/>
<dbReference type="PaxDb" id="272569-rrnAC1879"/>
<dbReference type="EnsemblBacteria" id="AAV46760">
    <property type="protein sequence ID" value="AAV46760"/>
    <property type="gene ID" value="rrnAC1879"/>
</dbReference>
<dbReference type="GeneID" id="40152815"/>
<dbReference type="KEGG" id="hma:rrnAC1879"/>
<dbReference type="PATRIC" id="fig|272569.17.peg.2544"/>
<dbReference type="eggNOG" id="arCOG04353">
    <property type="taxonomic scope" value="Archaea"/>
</dbReference>
<dbReference type="HOGENOM" id="CLU_056379_0_0_2"/>
<dbReference type="Proteomes" id="UP000001169">
    <property type="component" value="Chromosome I"/>
</dbReference>
<dbReference type="GO" id="GO:0003856">
    <property type="term" value="F:3-dehydroquinate synthase activity"/>
    <property type="evidence" value="ECO:0007669"/>
    <property type="project" value="InterPro"/>
</dbReference>
<dbReference type="GO" id="GO:0102042">
    <property type="term" value="F:dehydroquinate synthase activity"/>
    <property type="evidence" value="ECO:0007669"/>
    <property type="project" value="UniProtKB-EC"/>
</dbReference>
<dbReference type="GO" id="GO:0051287">
    <property type="term" value="F:NAD binding"/>
    <property type="evidence" value="ECO:0007669"/>
    <property type="project" value="UniProtKB-UniRule"/>
</dbReference>
<dbReference type="GO" id="GO:0008652">
    <property type="term" value="P:amino acid biosynthetic process"/>
    <property type="evidence" value="ECO:0007669"/>
    <property type="project" value="UniProtKB-KW"/>
</dbReference>
<dbReference type="GO" id="GO:0009073">
    <property type="term" value="P:aromatic amino acid family biosynthetic process"/>
    <property type="evidence" value="ECO:0007669"/>
    <property type="project" value="UniProtKB-UniRule"/>
</dbReference>
<dbReference type="HAMAP" id="MF_01244">
    <property type="entry name" value="Arch_DHQ_synthase"/>
    <property type="match status" value="1"/>
</dbReference>
<dbReference type="InterPro" id="IPR002812">
    <property type="entry name" value="DHQ_synth"/>
</dbReference>
<dbReference type="NCBIfam" id="NF002623">
    <property type="entry name" value="PRK02290.1-1"/>
    <property type="match status" value="1"/>
</dbReference>
<dbReference type="PANTHER" id="PTHR33563">
    <property type="match status" value="1"/>
</dbReference>
<dbReference type="PANTHER" id="PTHR33563:SF1">
    <property type="entry name" value="3-DEHYDROQUINATE SYNTHASE"/>
    <property type="match status" value="1"/>
</dbReference>
<dbReference type="Pfam" id="PF01959">
    <property type="entry name" value="DHQS"/>
    <property type="match status" value="1"/>
</dbReference>
<dbReference type="PIRSF" id="PIRSF006655">
    <property type="entry name" value="DHQ_synth"/>
    <property type="match status" value="1"/>
</dbReference>
<keyword id="KW-0028">Amino-acid biosynthesis</keyword>
<keyword id="KW-0057">Aromatic amino acid biosynthesis</keyword>
<keyword id="KW-0520">NAD</keyword>
<keyword id="KW-0560">Oxidoreductase</keyword>
<keyword id="KW-1185">Reference proteome</keyword>